<keyword id="KW-0131">Cell cycle</keyword>
<keyword id="KW-0132">Cell division</keyword>
<keyword id="KW-0997">Cell inner membrane</keyword>
<keyword id="KW-1003">Cell membrane</keyword>
<keyword id="KW-0133">Cell shape</keyword>
<keyword id="KW-0961">Cell wall biogenesis/degradation</keyword>
<keyword id="KW-0328">Glycosyltransferase</keyword>
<keyword id="KW-0472">Membrane</keyword>
<keyword id="KW-0573">Peptidoglycan synthesis</keyword>
<keyword id="KW-0808">Transferase</keyword>
<comment type="function">
    <text evidence="1">Cell wall formation. Catalyzes the transfer of a GlcNAc subunit on undecaprenyl-pyrophosphoryl-MurNAc-pentapeptide (lipid intermediate I) to form undecaprenyl-pyrophosphoryl-MurNAc-(pentapeptide)GlcNAc (lipid intermediate II).</text>
</comment>
<comment type="catalytic activity">
    <reaction evidence="1">
        <text>di-trans,octa-cis-undecaprenyl diphospho-N-acetyl-alpha-D-muramoyl-L-alanyl-D-glutamyl-meso-2,6-diaminopimeloyl-D-alanyl-D-alanine + UDP-N-acetyl-alpha-D-glucosamine = di-trans,octa-cis-undecaprenyl diphospho-[N-acetyl-alpha-D-glucosaminyl-(1-&gt;4)]-N-acetyl-alpha-D-muramoyl-L-alanyl-D-glutamyl-meso-2,6-diaminopimeloyl-D-alanyl-D-alanine + UDP + H(+)</text>
        <dbReference type="Rhea" id="RHEA:31227"/>
        <dbReference type="ChEBI" id="CHEBI:15378"/>
        <dbReference type="ChEBI" id="CHEBI:57705"/>
        <dbReference type="ChEBI" id="CHEBI:58223"/>
        <dbReference type="ChEBI" id="CHEBI:61387"/>
        <dbReference type="ChEBI" id="CHEBI:61388"/>
        <dbReference type="EC" id="2.4.1.227"/>
    </reaction>
</comment>
<comment type="pathway">
    <text evidence="1">Cell wall biogenesis; peptidoglycan biosynthesis.</text>
</comment>
<comment type="subcellular location">
    <subcellularLocation>
        <location evidence="1">Cell inner membrane</location>
        <topology evidence="1">Peripheral membrane protein</topology>
        <orientation evidence="1">Cytoplasmic side</orientation>
    </subcellularLocation>
</comment>
<comment type="similarity">
    <text evidence="1">Belongs to the glycosyltransferase 28 family. MurG subfamily.</text>
</comment>
<dbReference type="EC" id="2.4.1.227" evidence="1"/>
<dbReference type="EMBL" id="CP001080">
    <property type="protein sequence ID" value="ACD66061.1"/>
    <property type="molecule type" value="Genomic_DNA"/>
</dbReference>
<dbReference type="RefSeq" id="WP_012459143.1">
    <property type="nucleotide sequence ID" value="NC_010730.1"/>
</dbReference>
<dbReference type="SMR" id="B2V7Y8"/>
<dbReference type="STRING" id="436114.SYO3AOP1_0418"/>
<dbReference type="CAZy" id="GT28">
    <property type="family name" value="Glycosyltransferase Family 28"/>
</dbReference>
<dbReference type="KEGG" id="sul:SYO3AOP1_0418"/>
<dbReference type="eggNOG" id="COG0707">
    <property type="taxonomic scope" value="Bacteria"/>
</dbReference>
<dbReference type="HOGENOM" id="CLU_037404_2_1_0"/>
<dbReference type="UniPathway" id="UPA00219"/>
<dbReference type="GO" id="GO:0005886">
    <property type="term" value="C:plasma membrane"/>
    <property type="evidence" value="ECO:0007669"/>
    <property type="project" value="UniProtKB-SubCell"/>
</dbReference>
<dbReference type="GO" id="GO:0051991">
    <property type="term" value="F:UDP-N-acetyl-D-glucosamine:N-acetylmuramoyl-L-alanyl-D-glutamyl-meso-2,6-diaminopimelyl-D-alanyl-D-alanine-diphosphoundecaprenol 4-beta-N-acetylglucosaminlytransferase activity"/>
    <property type="evidence" value="ECO:0007669"/>
    <property type="project" value="RHEA"/>
</dbReference>
<dbReference type="GO" id="GO:0050511">
    <property type="term" value="F:undecaprenyldiphospho-muramoylpentapeptide beta-N-acetylglucosaminyltransferase activity"/>
    <property type="evidence" value="ECO:0007669"/>
    <property type="project" value="UniProtKB-UniRule"/>
</dbReference>
<dbReference type="GO" id="GO:0005975">
    <property type="term" value="P:carbohydrate metabolic process"/>
    <property type="evidence" value="ECO:0007669"/>
    <property type="project" value="InterPro"/>
</dbReference>
<dbReference type="GO" id="GO:0051301">
    <property type="term" value="P:cell division"/>
    <property type="evidence" value="ECO:0007669"/>
    <property type="project" value="UniProtKB-KW"/>
</dbReference>
<dbReference type="GO" id="GO:0071555">
    <property type="term" value="P:cell wall organization"/>
    <property type="evidence" value="ECO:0007669"/>
    <property type="project" value="UniProtKB-KW"/>
</dbReference>
<dbReference type="GO" id="GO:0030259">
    <property type="term" value="P:lipid glycosylation"/>
    <property type="evidence" value="ECO:0007669"/>
    <property type="project" value="UniProtKB-UniRule"/>
</dbReference>
<dbReference type="GO" id="GO:0009252">
    <property type="term" value="P:peptidoglycan biosynthetic process"/>
    <property type="evidence" value="ECO:0007669"/>
    <property type="project" value="UniProtKB-UniRule"/>
</dbReference>
<dbReference type="GO" id="GO:0008360">
    <property type="term" value="P:regulation of cell shape"/>
    <property type="evidence" value="ECO:0007669"/>
    <property type="project" value="UniProtKB-KW"/>
</dbReference>
<dbReference type="CDD" id="cd03785">
    <property type="entry name" value="GT28_MurG"/>
    <property type="match status" value="1"/>
</dbReference>
<dbReference type="Gene3D" id="3.40.50.2000">
    <property type="entry name" value="Glycogen Phosphorylase B"/>
    <property type="match status" value="2"/>
</dbReference>
<dbReference type="HAMAP" id="MF_00033">
    <property type="entry name" value="MurG"/>
    <property type="match status" value="1"/>
</dbReference>
<dbReference type="InterPro" id="IPR006009">
    <property type="entry name" value="GlcNAc_MurG"/>
</dbReference>
<dbReference type="InterPro" id="IPR007235">
    <property type="entry name" value="Glyco_trans_28_C"/>
</dbReference>
<dbReference type="InterPro" id="IPR004276">
    <property type="entry name" value="GlycoTrans_28_N"/>
</dbReference>
<dbReference type="NCBIfam" id="TIGR01133">
    <property type="entry name" value="murG"/>
    <property type="match status" value="1"/>
</dbReference>
<dbReference type="PANTHER" id="PTHR21015:SF22">
    <property type="entry name" value="GLYCOSYLTRANSFERASE"/>
    <property type="match status" value="1"/>
</dbReference>
<dbReference type="PANTHER" id="PTHR21015">
    <property type="entry name" value="UDP-N-ACETYLGLUCOSAMINE--N-ACETYLMURAMYL-(PENTAPEPTIDE) PYROPHOSPHORYL-UNDECAPRENOL N-ACETYLGLUCOSAMINE TRANSFERASE 1"/>
    <property type="match status" value="1"/>
</dbReference>
<dbReference type="Pfam" id="PF04101">
    <property type="entry name" value="Glyco_tran_28_C"/>
    <property type="match status" value="1"/>
</dbReference>
<dbReference type="Pfam" id="PF03033">
    <property type="entry name" value="Glyco_transf_28"/>
    <property type="match status" value="1"/>
</dbReference>
<dbReference type="SUPFAM" id="SSF53756">
    <property type="entry name" value="UDP-Glycosyltransferase/glycogen phosphorylase"/>
    <property type="match status" value="1"/>
</dbReference>
<accession>B2V7Y8</accession>
<reference key="1">
    <citation type="journal article" date="2009" name="J. Bacteriol.">
        <title>Complete and draft genome sequences of six members of the Aquificales.</title>
        <authorList>
            <person name="Reysenbach A.-L."/>
            <person name="Hamamura N."/>
            <person name="Podar M."/>
            <person name="Griffiths E."/>
            <person name="Ferreira S."/>
            <person name="Hochstein R."/>
            <person name="Heidelberg J."/>
            <person name="Johnson J."/>
            <person name="Mead D."/>
            <person name="Pohorille A."/>
            <person name="Sarmiento M."/>
            <person name="Schweighofer K."/>
            <person name="Seshadri R."/>
            <person name="Voytek M.A."/>
        </authorList>
    </citation>
    <scope>NUCLEOTIDE SEQUENCE [LARGE SCALE GENOMIC DNA]</scope>
    <source>
        <strain>YO3AOP1</strain>
    </source>
</reference>
<organism>
    <name type="scientific">Sulfurihydrogenibium sp. (strain YO3AOP1)</name>
    <dbReference type="NCBI Taxonomy" id="436114"/>
    <lineage>
        <taxon>Bacteria</taxon>
        <taxon>Pseudomonadati</taxon>
        <taxon>Aquificota</taxon>
        <taxon>Aquificia</taxon>
        <taxon>Aquificales</taxon>
        <taxon>Hydrogenothermaceae</taxon>
        <taxon>Sulfurihydrogenibium</taxon>
    </lineage>
</organism>
<sequence length="347" mass="39217">MKKVFISGGGTGGHFYPALSVAENLKEKGFSITYIGTTNGIENKKDFPADEKILYPMRAVRGKSIVGKIQGVFSLLSTTFKVYKQIKKEKPDFSICFGGYTSIPLGLASFLARVPLYIHEQNSIPSYSNKILSYFAKKVFITFELTAKYFDRKKTVLTGMPLRKNIIERAKNYVYKPNQTKTVLVVGGSQGAKKLSESIISLASEMKDIKFILIKGKWQVEVPNLENLTVYEYVDNMEDLYTSADVVISRSGSSSVNEILCFGKYAIFVPFPYAASNHQYYNVKWLKDLGLCELIEEKDLSKEVLKKALEDAFNKDLESLSKKIKEYAIFDSDEKIVENILNDFKND</sequence>
<evidence type="ECO:0000255" key="1">
    <source>
        <dbReference type="HAMAP-Rule" id="MF_00033"/>
    </source>
</evidence>
<proteinExistence type="inferred from homology"/>
<gene>
    <name evidence="1" type="primary">murG</name>
    <name type="ordered locus">SYO3AOP1_0418</name>
</gene>
<feature type="chain" id="PRO_1000116485" description="UDP-N-acetylglucosamine--N-acetylmuramyl-(pentapeptide) pyrophosphoryl-undecaprenol N-acetylglucosamine transferase">
    <location>
        <begin position="1"/>
        <end position="347"/>
    </location>
</feature>
<feature type="binding site" evidence="1">
    <location>
        <begin position="11"/>
        <end position="13"/>
    </location>
    <ligand>
        <name>UDP-N-acetyl-alpha-D-glucosamine</name>
        <dbReference type="ChEBI" id="CHEBI:57705"/>
    </ligand>
</feature>
<feature type="binding site" evidence="1">
    <location>
        <position position="122"/>
    </location>
    <ligand>
        <name>UDP-N-acetyl-alpha-D-glucosamine</name>
        <dbReference type="ChEBI" id="CHEBI:57705"/>
    </ligand>
</feature>
<feature type="binding site" evidence="1">
    <location>
        <position position="163"/>
    </location>
    <ligand>
        <name>UDP-N-acetyl-alpha-D-glucosamine</name>
        <dbReference type="ChEBI" id="CHEBI:57705"/>
    </ligand>
</feature>
<feature type="binding site" evidence="1">
    <location>
        <position position="189"/>
    </location>
    <ligand>
        <name>UDP-N-acetyl-alpha-D-glucosamine</name>
        <dbReference type="ChEBI" id="CHEBI:57705"/>
    </ligand>
</feature>
<feature type="binding site" evidence="1">
    <location>
        <position position="279"/>
    </location>
    <ligand>
        <name>UDP-N-acetyl-alpha-D-glucosamine</name>
        <dbReference type="ChEBI" id="CHEBI:57705"/>
    </ligand>
</feature>
<protein>
    <recommendedName>
        <fullName evidence="1">UDP-N-acetylglucosamine--N-acetylmuramyl-(pentapeptide) pyrophosphoryl-undecaprenol N-acetylglucosamine transferase</fullName>
        <ecNumber evidence="1">2.4.1.227</ecNumber>
    </recommendedName>
    <alternativeName>
        <fullName evidence="1">Undecaprenyl-PP-MurNAc-pentapeptide-UDPGlcNAc GlcNAc transferase</fullName>
    </alternativeName>
</protein>
<name>MURG_SULSY</name>